<proteinExistence type="evidence at protein level"/>
<reference key="1">
    <citation type="journal article" date="1991" name="J. Biol. Chem.">
        <title>Nucleotide and deduced amino acid sequence of human threonyl-tRNA synthetase reveals extensive homology to the Escherichia coli and yeast enzymes.</title>
        <authorList>
            <person name="Cruzen M.E."/>
            <person name="Arfin S.M."/>
        </authorList>
    </citation>
    <scope>NUCLEOTIDE SEQUENCE [MRNA] (ISOFORM 1)</scope>
</reference>
<reference key="2">
    <citation type="journal article" date="2004" name="Nat. Genet.">
        <title>Complete sequencing and characterization of 21,243 full-length human cDNAs.</title>
        <authorList>
            <person name="Ota T."/>
            <person name="Suzuki Y."/>
            <person name="Nishikawa T."/>
            <person name="Otsuki T."/>
            <person name="Sugiyama T."/>
            <person name="Irie R."/>
            <person name="Wakamatsu A."/>
            <person name="Hayashi K."/>
            <person name="Sato H."/>
            <person name="Nagai K."/>
            <person name="Kimura K."/>
            <person name="Makita H."/>
            <person name="Sekine M."/>
            <person name="Obayashi M."/>
            <person name="Nishi T."/>
            <person name="Shibahara T."/>
            <person name="Tanaka T."/>
            <person name="Ishii S."/>
            <person name="Yamamoto J."/>
            <person name="Saito K."/>
            <person name="Kawai Y."/>
            <person name="Isono Y."/>
            <person name="Nakamura Y."/>
            <person name="Nagahari K."/>
            <person name="Murakami K."/>
            <person name="Yasuda T."/>
            <person name="Iwayanagi T."/>
            <person name="Wagatsuma M."/>
            <person name="Shiratori A."/>
            <person name="Sudo H."/>
            <person name="Hosoiri T."/>
            <person name="Kaku Y."/>
            <person name="Kodaira H."/>
            <person name="Kondo H."/>
            <person name="Sugawara M."/>
            <person name="Takahashi M."/>
            <person name="Kanda K."/>
            <person name="Yokoi T."/>
            <person name="Furuya T."/>
            <person name="Kikkawa E."/>
            <person name="Omura Y."/>
            <person name="Abe K."/>
            <person name="Kamihara K."/>
            <person name="Katsuta N."/>
            <person name="Sato K."/>
            <person name="Tanikawa M."/>
            <person name="Yamazaki M."/>
            <person name="Ninomiya K."/>
            <person name="Ishibashi T."/>
            <person name="Yamashita H."/>
            <person name="Murakawa K."/>
            <person name="Fujimori K."/>
            <person name="Tanai H."/>
            <person name="Kimata M."/>
            <person name="Watanabe M."/>
            <person name="Hiraoka S."/>
            <person name="Chiba Y."/>
            <person name="Ishida S."/>
            <person name="Ono Y."/>
            <person name="Takiguchi S."/>
            <person name="Watanabe S."/>
            <person name="Yosida M."/>
            <person name="Hotuta T."/>
            <person name="Kusano J."/>
            <person name="Kanehori K."/>
            <person name="Takahashi-Fujii A."/>
            <person name="Hara H."/>
            <person name="Tanase T.-O."/>
            <person name="Nomura Y."/>
            <person name="Togiya S."/>
            <person name="Komai F."/>
            <person name="Hara R."/>
            <person name="Takeuchi K."/>
            <person name="Arita M."/>
            <person name="Imose N."/>
            <person name="Musashino K."/>
            <person name="Yuuki H."/>
            <person name="Oshima A."/>
            <person name="Sasaki N."/>
            <person name="Aotsuka S."/>
            <person name="Yoshikawa Y."/>
            <person name="Matsunawa H."/>
            <person name="Ichihara T."/>
            <person name="Shiohata N."/>
            <person name="Sano S."/>
            <person name="Moriya S."/>
            <person name="Momiyama H."/>
            <person name="Satoh N."/>
            <person name="Takami S."/>
            <person name="Terashima Y."/>
            <person name="Suzuki O."/>
            <person name="Nakagawa S."/>
            <person name="Senoh A."/>
            <person name="Mizoguchi H."/>
            <person name="Goto Y."/>
            <person name="Shimizu F."/>
            <person name="Wakebe H."/>
            <person name="Hishigaki H."/>
            <person name="Watanabe T."/>
            <person name="Sugiyama A."/>
            <person name="Takemoto M."/>
            <person name="Kawakami B."/>
            <person name="Yamazaki M."/>
            <person name="Watanabe K."/>
            <person name="Kumagai A."/>
            <person name="Itakura S."/>
            <person name="Fukuzumi Y."/>
            <person name="Fujimori Y."/>
            <person name="Komiyama M."/>
            <person name="Tashiro H."/>
            <person name="Tanigami A."/>
            <person name="Fujiwara T."/>
            <person name="Ono T."/>
            <person name="Yamada K."/>
            <person name="Fujii Y."/>
            <person name="Ozaki K."/>
            <person name="Hirao M."/>
            <person name="Ohmori Y."/>
            <person name="Kawabata A."/>
            <person name="Hikiji T."/>
            <person name="Kobatake N."/>
            <person name="Inagaki H."/>
            <person name="Ikema Y."/>
            <person name="Okamoto S."/>
            <person name="Okitani R."/>
            <person name="Kawakami T."/>
            <person name="Noguchi S."/>
            <person name="Itoh T."/>
            <person name="Shigeta K."/>
            <person name="Senba T."/>
            <person name="Matsumura K."/>
            <person name="Nakajima Y."/>
            <person name="Mizuno T."/>
            <person name="Morinaga M."/>
            <person name="Sasaki M."/>
            <person name="Togashi T."/>
            <person name="Oyama M."/>
            <person name="Hata H."/>
            <person name="Watanabe M."/>
            <person name="Komatsu T."/>
            <person name="Mizushima-Sugano J."/>
            <person name="Satoh T."/>
            <person name="Shirai Y."/>
            <person name="Takahashi Y."/>
            <person name="Nakagawa K."/>
            <person name="Okumura K."/>
            <person name="Nagase T."/>
            <person name="Nomura N."/>
            <person name="Kikuchi H."/>
            <person name="Masuho Y."/>
            <person name="Yamashita R."/>
            <person name="Nakai K."/>
            <person name="Yada T."/>
            <person name="Nakamura Y."/>
            <person name="Ohara O."/>
            <person name="Isogai T."/>
            <person name="Sugano S."/>
        </authorList>
    </citation>
    <scope>NUCLEOTIDE SEQUENCE [LARGE SCALE MRNA] (ISOFORMS 1 AND 2)</scope>
    <source>
        <tissue>Cerebellum</tissue>
        <tissue>Testis</tissue>
    </source>
</reference>
<reference key="3">
    <citation type="journal article" date="2004" name="Nature">
        <title>The DNA sequence and comparative analysis of human chromosome 5.</title>
        <authorList>
            <person name="Schmutz J."/>
            <person name="Martin J."/>
            <person name="Terry A."/>
            <person name="Couronne O."/>
            <person name="Grimwood J."/>
            <person name="Lowry S."/>
            <person name="Gordon L.A."/>
            <person name="Scott D."/>
            <person name="Xie G."/>
            <person name="Huang W."/>
            <person name="Hellsten U."/>
            <person name="Tran-Gyamfi M."/>
            <person name="She X."/>
            <person name="Prabhakar S."/>
            <person name="Aerts A."/>
            <person name="Altherr M."/>
            <person name="Bajorek E."/>
            <person name="Black S."/>
            <person name="Branscomb E."/>
            <person name="Caoile C."/>
            <person name="Challacombe J.F."/>
            <person name="Chan Y.M."/>
            <person name="Denys M."/>
            <person name="Detter J.C."/>
            <person name="Escobar J."/>
            <person name="Flowers D."/>
            <person name="Fotopulos D."/>
            <person name="Glavina T."/>
            <person name="Gomez M."/>
            <person name="Gonzales E."/>
            <person name="Goodstein D."/>
            <person name="Grigoriev I."/>
            <person name="Groza M."/>
            <person name="Hammon N."/>
            <person name="Hawkins T."/>
            <person name="Haydu L."/>
            <person name="Israni S."/>
            <person name="Jett J."/>
            <person name="Kadner K."/>
            <person name="Kimball H."/>
            <person name="Kobayashi A."/>
            <person name="Lopez F."/>
            <person name="Lou Y."/>
            <person name="Martinez D."/>
            <person name="Medina C."/>
            <person name="Morgan J."/>
            <person name="Nandkeshwar R."/>
            <person name="Noonan J.P."/>
            <person name="Pitluck S."/>
            <person name="Pollard M."/>
            <person name="Predki P."/>
            <person name="Priest J."/>
            <person name="Ramirez L."/>
            <person name="Retterer J."/>
            <person name="Rodriguez A."/>
            <person name="Rogers S."/>
            <person name="Salamov A."/>
            <person name="Salazar A."/>
            <person name="Thayer N."/>
            <person name="Tice H."/>
            <person name="Tsai M."/>
            <person name="Ustaszewska A."/>
            <person name="Vo N."/>
            <person name="Wheeler J."/>
            <person name="Wu K."/>
            <person name="Yang J."/>
            <person name="Dickson M."/>
            <person name="Cheng J.-F."/>
            <person name="Eichler E.E."/>
            <person name="Olsen A."/>
            <person name="Pennacchio L.A."/>
            <person name="Rokhsar D.S."/>
            <person name="Richardson P."/>
            <person name="Lucas S.M."/>
            <person name="Myers R.M."/>
            <person name="Rubin E.M."/>
        </authorList>
    </citation>
    <scope>NUCLEOTIDE SEQUENCE [LARGE SCALE GENOMIC DNA]</scope>
</reference>
<reference key="4">
    <citation type="submission" date="2005-07" db="EMBL/GenBank/DDBJ databases">
        <authorList>
            <person name="Mural R.J."/>
            <person name="Istrail S."/>
            <person name="Sutton G.G."/>
            <person name="Florea L."/>
            <person name="Halpern A.L."/>
            <person name="Mobarry C.M."/>
            <person name="Lippert R."/>
            <person name="Walenz B."/>
            <person name="Shatkay H."/>
            <person name="Dew I."/>
            <person name="Miller J.R."/>
            <person name="Flanigan M.J."/>
            <person name="Edwards N.J."/>
            <person name="Bolanos R."/>
            <person name="Fasulo D."/>
            <person name="Halldorsson B.V."/>
            <person name="Hannenhalli S."/>
            <person name="Turner R."/>
            <person name="Yooseph S."/>
            <person name="Lu F."/>
            <person name="Nusskern D.R."/>
            <person name="Shue B.C."/>
            <person name="Zheng X.H."/>
            <person name="Zhong F."/>
            <person name="Delcher A.L."/>
            <person name="Huson D.H."/>
            <person name="Kravitz S.A."/>
            <person name="Mouchard L."/>
            <person name="Reinert K."/>
            <person name="Remington K.A."/>
            <person name="Clark A.G."/>
            <person name="Waterman M.S."/>
            <person name="Eichler E.E."/>
            <person name="Adams M.D."/>
            <person name="Hunkapiller M.W."/>
            <person name="Myers E.W."/>
            <person name="Venter J.C."/>
        </authorList>
    </citation>
    <scope>NUCLEOTIDE SEQUENCE [LARGE SCALE GENOMIC DNA]</scope>
</reference>
<reference key="5">
    <citation type="journal article" date="2004" name="Genome Res.">
        <title>The status, quality, and expansion of the NIH full-length cDNA project: the Mammalian Gene Collection (MGC).</title>
        <authorList>
            <consortium name="The MGC Project Team"/>
        </authorList>
    </citation>
    <scope>NUCLEOTIDE SEQUENCE [LARGE SCALE MRNA] (ISOFORM 1)</scope>
    <source>
        <tissue>Cervix</tissue>
        <tissue>Lung</tissue>
    </source>
</reference>
<reference key="6">
    <citation type="journal article" date="2005" name="Biochem. Biophys. Res. Commun.">
        <title>Proteomic identification of proteins conjugated to ISG15 in mouse and human cells.</title>
        <authorList>
            <person name="Giannakopoulos N.V."/>
            <person name="Luo J.K."/>
            <person name="Papov V."/>
            <person name="Zou W."/>
            <person name="Lenschow D.J."/>
            <person name="Jacobs B.S."/>
            <person name="Borden E.C."/>
            <person name="Li J."/>
            <person name="Virgin H.W."/>
            <person name="Zhang D.E."/>
        </authorList>
    </citation>
    <scope>ISGYLATION</scope>
</reference>
<reference key="7">
    <citation type="journal article" date="2009" name="Science">
        <title>Lysine acetylation targets protein complexes and co-regulates major cellular functions.</title>
        <authorList>
            <person name="Choudhary C."/>
            <person name="Kumar C."/>
            <person name="Gnad F."/>
            <person name="Nielsen M.L."/>
            <person name="Rehman M."/>
            <person name="Walther T.C."/>
            <person name="Olsen J.V."/>
            <person name="Mann M."/>
        </authorList>
    </citation>
    <scope>ACETYLATION [LARGE SCALE ANALYSIS] AT LYS-243</scope>
    <scope>IDENTIFICATION BY MASS SPECTROMETRY [LARGE SCALE ANALYSIS]</scope>
</reference>
<reference key="8">
    <citation type="journal article" date="2011" name="BMC Syst. Biol.">
        <title>Initial characterization of the human central proteome.</title>
        <authorList>
            <person name="Burkard T.R."/>
            <person name="Planyavsky M."/>
            <person name="Kaupe I."/>
            <person name="Breitwieser F.P."/>
            <person name="Buerckstuemmer T."/>
            <person name="Bennett K.L."/>
            <person name="Superti-Furga G."/>
            <person name="Colinge J."/>
        </authorList>
    </citation>
    <scope>IDENTIFICATION BY MASS SPECTROMETRY [LARGE SCALE ANALYSIS]</scope>
</reference>
<reference key="9">
    <citation type="journal article" date="2013" name="J. Proteome Res.">
        <title>Toward a comprehensive characterization of a human cancer cell phosphoproteome.</title>
        <authorList>
            <person name="Zhou H."/>
            <person name="Di Palma S."/>
            <person name="Preisinger C."/>
            <person name="Peng M."/>
            <person name="Polat A.N."/>
            <person name="Heck A.J."/>
            <person name="Mohammed S."/>
        </authorList>
    </citation>
    <scope>PHOSPHORYLATION [LARGE SCALE ANALYSIS] AT SER-39; THR-246; TYR-298; THR-453 AND SER-702</scope>
    <scope>IDENTIFICATION BY MASS SPECTROMETRY [LARGE SCALE ANALYSIS]</scope>
    <source>
        <tissue>Cervix carcinoma</tissue>
        <tissue>Erythroleukemia</tissue>
    </source>
</reference>
<reference key="10">
    <citation type="submission" date="2005-07" db="PDB data bank">
        <title>Solution structure of the TGS domain from human threonyl-tRNA synthetase.</title>
        <authorList>
            <consortium name="RIKEN structural genomics initiative (RSGI)"/>
        </authorList>
    </citation>
    <scope>STRUCTURE BY NMR OF 79-153</scope>
</reference>
<reference evidence="10" key="11">
    <citation type="journal article" date="2015" name="Nat. Commun.">
        <title>Structural basis for full-spectrum inhibition of translational functions on a tRNA synthetase.</title>
        <authorList>
            <person name="Fang P."/>
            <person name="Yu X."/>
            <person name="Jeong S.J."/>
            <person name="Mirando A."/>
            <person name="Chen K."/>
            <person name="Chen X."/>
            <person name="Kim S."/>
            <person name="Francklyn C.S."/>
            <person name="Guo M."/>
        </authorList>
    </citation>
    <scope>X-RAY CRYSTALLOGRAPHY (2.60 ANGSTROMS) OF 322-723 IN COMPLEX WITH BORRELIDIN INHIBITOR</scope>
    <scope>FUNCTION</scope>
    <scope>CATALYTIC ACTIVITY</scope>
    <scope>ACTIVITY REGULATION</scope>
    <scope>SUBUNIT</scope>
    <scope>MUTAGENESIS OF TYR-392; PHE-458; ASP-462 AND LEU-567</scope>
</reference>
<reference key="12">
    <citation type="journal article" date="2019" name="Am. J. Hum. Genet.">
        <title>Bi-allelic TARS Mutations Are Associated with Brittle Hair Phenotype.</title>
        <authorList>
            <person name="Theil A.F."/>
            <person name="Botta E."/>
            <person name="Raams A."/>
            <person name="Smith D.E.C."/>
            <person name="Mendes M.I."/>
            <person name="Caligiuri G."/>
            <person name="Giachetti S."/>
            <person name="Bione S."/>
            <person name="Carriero R."/>
            <person name="Liberi G."/>
            <person name="Zardoni L."/>
            <person name="Swagemakers S.M.A."/>
            <person name="Salomons G.S."/>
            <person name="Sarasin A."/>
            <person name="Lehmann A."/>
            <person name="van der Spek P.J."/>
            <person name="Ogi T."/>
            <person name="Hoeijmakers J.H.J."/>
            <person name="Vermeulen W."/>
            <person name="Orioli D."/>
        </authorList>
    </citation>
    <scope>INVOLVEMENT IN TTD7</scope>
    <scope>VARIANTS TTD7 PRO-227; GLU-276 AND 638-ARG--PHE-723 DEL</scope>
    <scope>CHARACTERIZATION OF VARIANT TTD7 PRO-227</scope>
    <scope>FUNCTION</scope>
</reference>
<keyword id="KW-0002">3D-structure</keyword>
<keyword id="KW-0007">Acetylation</keyword>
<keyword id="KW-0025">Alternative splicing</keyword>
<keyword id="KW-0030">Aminoacyl-tRNA synthetase</keyword>
<keyword id="KW-0067">ATP-binding</keyword>
<keyword id="KW-0963">Cytoplasm</keyword>
<keyword id="KW-0225">Disease variant</keyword>
<keyword id="KW-0436">Ligase</keyword>
<keyword id="KW-0547">Nucleotide-binding</keyword>
<keyword id="KW-0597">Phosphoprotein</keyword>
<keyword id="KW-0648">Protein biosynthesis</keyword>
<keyword id="KW-1267">Proteomics identification</keyword>
<keyword id="KW-1185">Reference proteome</keyword>
<keyword id="KW-0694">RNA-binding</keyword>
<keyword id="KW-0820">tRNA-binding</keyword>
<keyword id="KW-0832">Ubl conjugation</keyword>
<gene>
    <name evidence="9" type="primary">TARS1</name>
    <name type="synonym">TARS</name>
</gene>
<organism>
    <name type="scientific">Homo sapiens</name>
    <name type="common">Human</name>
    <dbReference type="NCBI Taxonomy" id="9606"/>
    <lineage>
        <taxon>Eukaryota</taxon>
        <taxon>Metazoa</taxon>
        <taxon>Chordata</taxon>
        <taxon>Craniata</taxon>
        <taxon>Vertebrata</taxon>
        <taxon>Euteleostomi</taxon>
        <taxon>Mammalia</taxon>
        <taxon>Eutheria</taxon>
        <taxon>Euarchontoglires</taxon>
        <taxon>Primates</taxon>
        <taxon>Haplorrhini</taxon>
        <taxon>Catarrhini</taxon>
        <taxon>Hominidae</taxon>
        <taxon>Homo</taxon>
    </lineage>
</organism>
<name>SYTC_HUMAN</name>
<accession>P26639</accession>
<accession>A8K8I1</accession>
<accession>B4DEG8</accession>
<accession>Q96FP5</accession>
<accession>Q9BWA6</accession>
<feature type="chain" id="PRO_0000101119" description="Threonine--tRNA ligase 1, cytoplasmic">
    <location>
        <begin position="1"/>
        <end position="723"/>
    </location>
</feature>
<feature type="domain" description="TGS" evidence="2">
    <location>
        <begin position="79"/>
        <end position="143"/>
    </location>
</feature>
<feature type="region of interest" description="Disordered" evidence="3">
    <location>
        <begin position="1"/>
        <end position="46"/>
    </location>
</feature>
<feature type="compositionally biased region" description="Basic and acidic residues" evidence="3">
    <location>
        <begin position="14"/>
        <end position="39"/>
    </location>
</feature>
<feature type="modified residue" description="Phosphoserine" evidence="12">
    <location>
        <position position="39"/>
    </location>
</feature>
<feature type="modified residue" description="N6-acetyllysine" evidence="11">
    <location>
        <position position="243"/>
    </location>
</feature>
<feature type="modified residue" description="Phosphothreonine" evidence="12">
    <location>
        <position position="246"/>
    </location>
</feature>
<feature type="modified residue" description="Phosphotyrosine" evidence="12">
    <location>
        <position position="298"/>
    </location>
</feature>
<feature type="modified residue" description="Phosphothreonine" evidence="12">
    <location>
        <position position="453"/>
    </location>
</feature>
<feature type="modified residue" description="Phosphoserine" evidence="12">
    <location>
        <position position="702"/>
    </location>
</feature>
<feature type="splice variant" id="VSP_045114" description="In isoform 2." evidence="7">
    <original>S</original>
    <variation>SHTASCKNLSSLASLLASVAIPSSGMPWPPLFFL</variation>
    <location>
        <position position="110"/>
    </location>
</feature>
<feature type="sequence variant" id="VAR_034533" description="In dbSNP:rs34334786.">
    <original>G</original>
    <variation>D</variation>
    <location>
        <position position="21"/>
    </location>
</feature>
<feature type="sequence variant" id="VAR_083226" description="In TTD7; loss of protein stability; loss of threonine-tRNA ligase activity." evidence="6">
    <original>L</original>
    <variation>P</variation>
    <location>
        <position position="227"/>
    </location>
</feature>
<feature type="sequence variant" id="VAR_083227" description="In TTD7." evidence="6">
    <original>K</original>
    <variation>E</variation>
    <location>
        <position position="276"/>
    </location>
</feature>
<feature type="sequence variant" id="VAR_083228" description="In TTD7." evidence="6">
    <location>
        <begin position="638"/>
        <end position="723"/>
    </location>
</feature>
<feature type="mutagenesis site" description="Partially restores in vitro translation." evidence="5">
    <original>Y</original>
    <variation>E</variation>
    <location>
        <position position="392"/>
    </location>
</feature>
<feature type="mutagenesis site" description="Partially restores in vitro translation." evidence="5">
    <original>F</original>
    <variation>A</variation>
    <location>
        <position position="458"/>
    </location>
</feature>
<feature type="mutagenesis site" description="Does not restore in vitro translation, probably does not bind BN." evidence="5">
    <original>D</original>
    <variation>L</variation>
    <location>
        <position position="462"/>
    </location>
</feature>
<feature type="mutagenesis site" description="Does not restore in vitro translation, does not replace endogenous yeast enzyme." evidence="5">
    <original>L</original>
    <variation>R</variation>
    <variation>W</variation>
    <location>
        <position position="567"/>
    </location>
</feature>
<feature type="mutagenesis site" description="Replaces endogenous yeast enzyme." evidence="5">
    <original>L</original>
    <variation>V</variation>
    <location>
        <position position="567"/>
    </location>
</feature>
<feature type="sequence conflict" description="In Ref. 1; AAB04939." evidence="8" ref="1">
    <original>A</original>
    <variation>G</variation>
    <location>
        <position position="164"/>
    </location>
</feature>
<feature type="sequence conflict" description="In Ref. 1; AAB04939." evidence="8" ref="1">
    <original>A</original>
    <variation>V</variation>
    <location>
        <position position="350"/>
    </location>
</feature>
<feature type="sequence conflict" description="In Ref. 1; AAB04939." evidence="8" ref="1">
    <original>C</original>
    <variation>S</variation>
    <location>
        <position position="417"/>
    </location>
</feature>
<feature type="sequence conflict" description="In Ref. 1; AAB04939." evidence="8" ref="1">
    <original>V</original>
    <variation>G</variation>
    <location>
        <position position="439"/>
    </location>
</feature>
<feature type="sequence conflict" description="In Ref. 5; AAH10578." evidence="8" ref="5">
    <original>T</original>
    <variation>I</variation>
    <location>
        <position position="453"/>
    </location>
</feature>
<feature type="sequence conflict" description="In Ref. 1; AAB04939." evidence="8" ref="1">
    <original>D</original>
    <variation>E</variation>
    <location>
        <position position="581"/>
    </location>
</feature>
<feature type="sequence conflict" description="In Ref. 1; AAB04939." evidence="8" ref="1">
    <original>W</original>
    <variation>LA</variation>
    <location>
        <position position="612"/>
    </location>
</feature>
<feature type="sequence conflict" description="In Ref. 1; AAB04939." evidence="8" ref="1">
    <original>K</original>
    <variation>N</variation>
    <location>
        <position position="636"/>
    </location>
</feature>
<feature type="sequence conflict" description="In Ref. 1; AAB04939." evidence="8" ref="1">
    <original>S</original>
    <variation>T</variation>
    <location>
        <position position="683"/>
    </location>
</feature>
<feature type="helix" evidence="16">
    <location>
        <begin position="57"/>
        <end position="69"/>
    </location>
</feature>
<feature type="strand" evidence="13">
    <location>
        <begin position="82"/>
        <end position="86"/>
    </location>
</feature>
<feature type="strand" evidence="13">
    <location>
        <begin position="92"/>
        <end position="96"/>
    </location>
</feature>
<feature type="turn" evidence="13">
    <location>
        <begin position="97"/>
        <end position="99"/>
    </location>
</feature>
<feature type="helix" evidence="13">
    <location>
        <begin position="102"/>
        <end position="108"/>
    </location>
</feature>
<feature type="turn" evidence="13">
    <location>
        <begin position="111"/>
        <end position="113"/>
    </location>
</feature>
<feature type="helix" evidence="13">
    <location>
        <begin position="114"/>
        <end position="116"/>
    </location>
</feature>
<feature type="strand" evidence="13">
    <location>
        <begin position="120"/>
        <end position="127"/>
    </location>
</feature>
<feature type="strand" evidence="13">
    <location>
        <begin position="129"/>
        <end position="131"/>
    </location>
</feature>
<feature type="strand" evidence="13">
    <location>
        <begin position="135"/>
        <end position="141"/>
    </location>
</feature>
<feature type="helix" evidence="14">
    <location>
        <begin position="323"/>
        <end position="329"/>
    </location>
</feature>
<feature type="strand" evidence="14">
    <location>
        <begin position="332"/>
        <end position="334"/>
    </location>
</feature>
<feature type="helix" evidence="14">
    <location>
        <begin position="347"/>
        <end position="366"/>
    </location>
</feature>
<feature type="strand" evidence="14">
    <location>
        <begin position="376"/>
        <end position="379"/>
    </location>
</feature>
<feature type="helix" evidence="14">
    <location>
        <begin position="380"/>
        <end position="385"/>
    </location>
</feature>
<feature type="helix" evidence="14">
    <location>
        <begin position="388"/>
        <end position="391"/>
    </location>
</feature>
<feature type="helix" evidence="14">
    <location>
        <begin position="393"/>
        <end position="395"/>
    </location>
</feature>
<feature type="strand" evidence="14">
    <location>
        <begin position="398"/>
        <end position="401"/>
    </location>
</feature>
<feature type="strand" evidence="14">
    <location>
        <begin position="404"/>
        <end position="408"/>
    </location>
</feature>
<feature type="helix" evidence="14">
    <location>
        <begin position="413"/>
        <end position="421"/>
    </location>
</feature>
<feature type="helix" evidence="14">
    <location>
        <begin position="427"/>
        <end position="429"/>
    </location>
</feature>
<feature type="strand" evidence="14">
    <location>
        <begin position="431"/>
        <end position="436"/>
    </location>
</feature>
<feature type="strand" evidence="14">
    <location>
        <begin position="439"/>
        <end position="441"/>
    </location>
</feature>
<feature type="helix" evidence="14">
    <location>
        <begin position="446"/>
        <end position="448"/>
    </location>
</feature>
<feature type="turn" evidence="14">
    <location>
        <begin position="451"/>
        <end position="453"/>
    </location>
</feature>
<feature type="strand" evidence="14">
    <location>
        <begin position="456"/>
        <end position="459"/>
    </location>
</feature>
<feature type="strand" evidence="14">
    <location>
        <begin position="462"/>
        <end position="467"/>
    </location>
</feature>
<feature type="helix" evidence="14">
    <location>
        <begin position="469"/>
        <end position="471"/>
    </location>
</feature>
<feature type="helix" evidence="14">
    <location>
        <begin position="472"/>
        <end position="490"/>
    </location>
</feature>
<feature type="strand" evidence="14">
    <location>
        <begin position="493"/>
        <end position="499"/>
    </location>
</feature>
<feature type="helix" evidence="14">
    <location>
        <begin position="509"/>
        <end position="525"/>
    </location>
</feature>
<feature type="strand" evidence="14">
    <location>
        <begin position="530"/>
        <end position="533"/>
    </location>
</feature>
<feature type="strand" evidence="14">
    <location>
        <begin position="543"/>
        <end position="549"/>
    </location>
</feature>
<feature type="strand" evidence="14">
    <location>
        <begin position="555"/>
        <end position="565"/>
    </location>
</feature>
<feature type="helix" evidence="14">
    <location>
        <begin position="566"/>
        <end position="570"/>
    </location>
</feature>
<feature type="strand" evidence="14">
    <location>
        <begin position="587"/>
        <end position="595"/>
    </location>
</feature>
<feature type="helix" evidence="14">
    <location>
        <begin position="597"/>
        <end position="607"/>
    </location>
</feature>
<feature type="turn" evidence="14">
    <location>
        <begin position="608"/>
        <end position="610"/>
    </location>
</feature>
<feature type="helix" evidence="14">
    <location>
        <begin position="614"/>
        <end position="616"/>
    </location>
</feature>
<feature type="strand" evidence="14">
    <location>
        <begin position="621"/>
        <end position="627"/>
    </location>
</feature>
<feature type="helix" evidence="14">
    <location>
        <begin position="628"/>
        <end position="630"/>
    </location>
</feature>
<feature type="helix" evidence="14">
    <location>
        <begin position="631"/>
        <end position="642"/>
    </location>
</feature>
<feature type="turn" evidence="14">
    <location>
        <begin position="643"/>
        <end position="645"/>
    </location>
</feature>
<feature type="strand" evidence="14">
    <location>
        <begin position="648"/>
        <end position="650"/>
    </location>
</feature>
<feature type="helix" evidence="14">
    <location>
        <begin position="658"/>
        <end position="667"/>
    </location>
</feature>
<feature type="strand" evidence="14">
    <location>
        <begin position="671"/>
        <end position="676"/>
    </location>
</feature>
<feature type="helix" evidence="14">
    <location>
        <begin position="678"/>
        <end position="683"/>
    </location>
</feature>
<feature type="strand" evidence="14">
    <location>
        <begin position="685"/>
        <end position="690"/>
    </location>
</feature>
<feature type="strand" evidence="14">
    <location>
        <begin position="695"/>
        <end position="700"/>
    </location>
</feature>
<feature type="helix" evidence="14">
    <location>
        <begin position="701"/>
        <end position="713"/>
    </location>
</feature>
<feature type="helix" evidence="15">
    <location>
        <begin position="719"/>
        <end position="722"/>
    </location>
</feature>
<sequence length="723" mass="83435">MFEEKASSPSGKMGGEEKPIGAGEEKQKEGGKKKNKEGSGDGGRAELNPWPEYIYTRLEMYNILKAEHDSILAEKAEKDSKPIKVTLPDGKQVDAESWKTTPYQIACGISQGLADNTVIAKVNNVVWDLDRPLEEDCTLELLKFEDEEAQAVYWHSSAHIMGEAMERVYGGCLCYGPPIENGFYYDMYLEEGGVSSNDFSSLEALCKKIIKEKQAFERLEVKKETLLAMFKYNKFKCRILNEKVNTPTTTVYRCGPLIDLCRGPHVRHTGKIKALKIHKNSSTYWEGKADMETLQRIYGISFPDPKMLKEWEKFQEEAKNRDHRKIGRDQELYFFHELSPGSCFFLPKGAYIYNALIEFIRSEYRKRGFQEVVTPNIFNSRLWMTSGHWQHYSENMFSFEVEKELFALKPMNCPGHCLMFDHRPRSWRELPLRLADFGVLHRNELSGALTGLTRVRRFQQDDAHIFCAMEQIEDEIKGCLDFLRTVYSVFGFSFKLNLSTRPEKFLGDIEVWDQAEKQLENSLNEFGEKWELNSGDGAFYGPKIDIQIKDAIGRYHQCATIQLDFQLPIRFNLTYVSHDGDDKKRPVIVHRAILGSVERMIAILTENYGGKWPFWLSPRQVMVVPVGPTCDEYAQKVRQQFHDAKFMADIDLDPGCTLNKKIRNAQLAQYNFILVVGEKEKISGTVNIRTRDNKVHGERTISETIERLQQLKEFRSKQAEEEF</sequence>
<evidence type="ECO:0000250" key="1">
    <source>
        <dbReference type="UniProtKB" id="Q9D0R2"/>
    </source>
</evidence>
<evidence type="ECO:0000255" key="2">
    <source>
        <dbReference type="PROSITE-ProRule" id="PRU01228"/>
    </source>
</evidence>
<evidence type="ECO:0000256" key="3">
    <source>
        <dbReference type="SAM" id="MobiDB-lite"/>
    </source>
</evidence>
<evidence type="ECO:0000269" key="4">
    <source>
    </source>
</evidence>
<evidence type="ECO:0000269" key="5">
    <source>
    </source>
</evidence>
<evidence type="ECO:0000269" key="6">
    <source>
    </source>
</evidence>
<evidence type="ECO:0000303" key="7">
    <source>
    </source>
</evidence>
<evidence type="ECO:0000305" key="8"/>
<evidence type="ECO:0000312" key="9">
    <source>
        <dbReference type="HGNC" id="HGNC:11572"/>
    </source>
</evidence>
<evidence type="ECO:0007744" key="10">
    <source>
        <dbReference type="PDB" id="4P3N"/>
    </source>
</evidence>
<evidence type="ECO:0007744" key="11">
    <source>
    </source>
</evidence>
<evidence type="ECO:0007744" key="12">
    <source>
    </source>
</evidence>
<evidence type="ECO:0007829" key="13">
    <source>
        <dbReference type="PDB" id="1WWT"/>
    </source>
</evidence>
<evidence type="ECO:0007829" key="14">
    <source>
        <dbReference type="PDB" id="4HWT"/>
    </source>
</evidence>
<evidence type="ECO:0007829" key="15">
    <source>
        <dbReference type="PDB" id="4P3N"/>
    </source>
</evidence>
<evidence type="ECO:0007829" key="16">
    <source>
        <dbReference type="PDB" id="5XLN"/>
    </source>
</evidence>
<comment type="function">
    <text evidence="1 5 6">Catalyzes the attachment of threonine to tRNA(Thr) in a two-step reaction: threonine is first activated by ATP to form Thr-AMP and then transferred to the acceptor end of tRNA(Thr) (PubMed:25824639, PubMed:31374204). Also edits incorrectly charged tRNA(Thr) via its editing domain, at the post-transfer stage (By similarity).</text>
</comment>
<comment type="catalytic activity">
    <reaction evidence="5">
        <text>tRNA(Thr) + L-threonine + ATP = L-threonyl-tRNA(Thr) + AMP + diphosphate + H(+)</text>
        <dbReference type="Rhea" id="RHEA:24624"/>
        <dbReference type="Rhea" id="RHEA-COMP:9670"/>
        <dbReference type="Rhea" id="RHEA-COMP:9704"/>
        <dbReference type="ChEBI" id="CHEBI:15378"/>
        <dbReference type="ChEBI" id="CHEBI:30616"/>
        <dbReference type="ChEBI" id="CHEBI:33019"/>
        <dbReference type="ChEBI" id="CHEBI:57926"/>
        <dbReference type="ChEBI" id="CHEBI:78442"/>
        <dbReference type="ChEBI" id="CHEBI:78534"/>
        <dbReference type="ChEBI" id="CHEBI:456215"/>
        <dbReference type="EC" id="6.1.1.3"/>
    </reaction>
</comment>
<comment type="activity regulation">
    <text evidence="5">Inhibited by borrelidin (BN, IC 50 is 7 nM), which binds to 4 distinct subsites in the protein, preventing binding of all 3 substrates (PubMed:25824639).</text>
</comment>
<comment type="subunit">
    <text evidence="5">Homodimer.</text>
</comment>
<comment type="interaction">
    <interactant intactId="EBI-1042683">
        <id>P26639</id>
    </interactant>
    <interactant intactId="EBI-718586">
        <id>Q9BPX7</id>
        <label>C7orf25</label>
    </interactant>
    <organismsDiffer>false</organismsDiffer>
    <experiments>3</experiments>
</comment>
<comment type="interaction">
    <interactant intactId="EBI-1042683">
        <id>P26639</id>
    </interactant>
    <interactant intactId="EBI-748974">
        <id>Q96CV9</id>
        <label>OPTN</label>
    </interactant>
    <organismsDiffer>false</organismsDiffer>
    <experiments>3</experiments>
</comment>
<comment type="interaction">
    <interactant intactId="EBI-1042683">
        <id>P26639</id>
    </interactant>
    <interactant intactId="EBI-10179062">
        <id>O43704</id>
        <label>SULT1B1</label>
    </interactant>
    <organismsDiffer>false</organismsDiffer>
    <experiments>3</experiments>
</comment>
<comment type="interaction">
    <interactant intactId="EBI-1042683">
        <id>P26639</id>
    </interactant>
    <interactant intactId="EBI-1056629">
        <id>A2RTX5</id>
        <label>TARS3</label>
    </interactant>
    <organismsDiffer>false</organismsDiffer>
    <experiments>6</experiments>
</comment>
<comment type="subcellular location">
    <subcellularLocation>
        <location evidence="1">Cytoplasm</location>
    </subcellularLocation>
</comment>
<comment type="alternative products">
    <event type="alternative splicing"/>
    <isoform>
        <id>P26639-1</id>
        <name>1</name>
        <sequence type="displayed"/>
    </isoform>
    <isoform>
        <id>P26639-2</id>
        <name>2</name>
        <sequence type="described" ref="VSP_045114"/>
    </isoform>
</comment>
<comment type="PTM">
    <text evidence="4">ISGylated.</text>
</comment>
<comment type="disease" evidence="6">
    <disease id="DI-05638">
        <name>Trichothiodystrophy 7, non-photosensitive</name>
        <acronym>TTD7</acronym>
        <description>A form of trichothiodystrophy, a disease characterized by sulfur-deficient brittle hair and multisystem variable abnormalities. The spectrum of clinical features varies from mild disease with only hair involvement to severe disease with cutaneous, neurologic and profound developmental defects. Ichthyosis, intellectual and developmental disabilities, decreased fertility, abnormal characteristics at birth, ocular abnormalities, short stature, and infections are common manifestations. There are both photosensitive and non-photosensitive forms of the disorder. TTD7 patients do not manifest cutaneous photosensitivity. They have cysteine- and threonine-deficient hair with alternating light and dark 'tiger-tail' banding pattern observed under polarization microscopy. Inheritance pattern is autosomal recessive.</description>
        <dbReference type="MIM" id="618546"/>
    </disease>
    <text>The disease is caused by variants affecting the gene represented in this entry.</text>
</comment>
<comment type="similarity">
    <text evidence="8">Belongs to the class-II aminoacyl-tRNA synthetase family.</text>
</comment>
<comment type="sequence caution" evidence="8">
    <conflict type="erroneous initiation">
        <sequence resource="EMBL-CDS" id="AAB04939"/>
    </conflict>
    <text>Truncated N-terminus.</text>
</comment>
<protein>
    <recommendedName>
        <fullName evidence="8">Threonine--tRNA ligase 1, cytoplasmic</fullName>
        <ecNumber evidence="5">6.1.1.3</ecNumber>
    </recommendedName>
    <alternativeName>
        <fullName>Threonyl-tRNA synthetase</fullName>
        <shortName>ThrRS</shortName>
    </alternativeName>
    <alternativeName>
        <fullName evidence="9">Threonyl-tRNA synthetase 1</fullName>
    </alternativeName>
</protein>
<dbReference type="EC" id="6.1.1.3" evidence="5"/>
<dbReference type="EMBL" id="M63180">
    <property type="protein sequence ID" value="AAB04939.1"/>
    <property type="status" value="ALT_INIT"/>
    <property type="molecule type" value="mRNA"/>
</dbReference>
<dbReference type="EMBL" id="AK292346">
    <property type="protein sequence ID" value="BAF85035.1"/>
    <property type="molecule type" value="mRNA"/>
</dbReference>
<dbReference type="EMBL" id="AK293620">
    <property type="protein sequence ID" value="BAG57079.1"/>
    <property type="molecule type" value="mRNA"/>
</dbReference>
<dbReference type="EMBL" id="AC025441">
    <property type="status" value="NOT_ANNOTATED_CDS"/>
    <property type="molecule type" value="Genomic_DNA"/>
</dbReference>
<dbReference type="EMBL" id="AC034231">
    <property type="status" value="NOT_ANNOTATED_CDS"/>
    <property type="molecule type" value="Genomic_DNA"/>
</dbReference>
<dbReference type="EMBL" id="CH471118">
    <property type="protein sequence ID" value="EAX10804.1"/>
    <property type="molecule type" value="Genomic_DNA"/>
</dbReference>
<dbReference type="EMBL" id="BC000517">
    <property type="protein sequence ID" value="AAH00517.2"/>
    <property type="molecule type" value="mRNA"/>
</dbReference>
<dbReference type="EMBL" id="BC010578">
    <property type="protein sequence ID" value="AAH10578.2"/>
    <property type="molecule type" value="mRNA"/>
</dbReference>
<dbReference type="CCDS" id="CCDS3899.1">
    <molecule id="P26639-1"/>
</dbReference>
<dbReference type="CCDS" id="CCDS58943.1">
    <molecule id="P26639-2"/>
</dbReference>
<dbReference type="PIR" id="A38867">
    <property type="entry name" value="YSHUT"/>
</dbReference>
<dbReference type="RefSeq" id="NP_001245366.1">
    <molecule id="P26639-1"/>
    <property type="nucleotide sequence ID" value="NM_001258437.1"/>
</dbReference>
<dbReference type="RefSeq" id="NP_001245367.1">
    <molecule id="P26639-2"/>
    <property type="nucleotide sequence ID" value="NM_001258438.2"/>
</dbReference>
<dbReference type="RefSeq" id="NP_689508.3">
    <molecule id="P26639-1"/>
    <property type="nucleotide sequence ID" value="NM_152295.4"/>
</dbReference>
<dbReference type="PDB" id="1WWT">
    <property type="method" value="NMR"/>
    <property type="chains" value="A=79-153"/>
</dbReference>
<dbReference type="PDB" id="4HWT">
    <property type="method" value="X-ray"/>
    <property type="resolution" value="2.30 A"/>
    <property type="chains" value="A/B=321-723"/>
</dbReference>
<dbReference type="PDB" id="4P3N">
    <property type="method" value="X-ray"/>
    <property type="resolution" value="2.60 A"/>
    <property type="chains" value="A/B/C/D=322-723"/>
</dbReference>
<dbReference type="PDB" id="4TTV">
    <property type="method" value="X-ray"/>
    <property type="resolution" value="2.80 A"/>
    <property type="chains" value="A/B/C/D=322-723"/>
</dbReference>
<dbReference type="PDB" id="5XLN">
    <property type="method" value="X-ray"/>
    <property type="resolution" value="1.90 A"/>
    <property type="chains" value="B=30-74"/>
</dbReference>
<dbReference type="PDBsum" id="1WWT"/>
<dbReference type="PDBsum" id="4HWT"/>
<dbReference type="PDBsum" id="4P3N"/>
<dbReference type="PDBsum" id="4TTV"/>
<dbReference type="PDBsum" id="5XLN"/>
<dbReference type="SMR" id="P26639"/>
<dbReference type="BioGRID" id="112760">
    <property type="interactions" value="208"/>
</dbReference>
<dbReference type="FunCoup" id="P26639">
    <property type="interactions" value="1842"/>
</dbReference>
<dbReference type="IntAct" id="P26639">
    <property type="interactions" value="51"/>
</dbReference>
<dbReference type="MINT" id="P26639"/>
<dbReference type="STRING" id="9606.ENSP00000387710"/>
<dbReference type="BindingDB" id="P26639"/>
<dbReference type="ChEMBL" id="CHEMBL3391"/>
<dbReference type="DrugBank" id="DB00156">
    <property type="generic name" value="Threonine"/>
</dbReference>
<dbReference type="MoonProt" id="P26639"/>
<dbReference type="GlyGen" id="P26639">
    <property type="glycosylation" value="2 sites, 1 O-linked glycan (1 site)"/>
</dbReference>
<dbReference type="iPTMnet" id="P26639"/>
<dbReference type="MetOSite" id="P26639"/>
<dbReference type="PhosphoSitePlus" id="P26639"/>
<dbReference type="SwissPalm" id="P26639"/>
<dbReference type="BioMuta" id="TARS"/>
<dbReference type="DMDM" id="60267755"/>
<dbReference type="CPTAC" id="CPTAC-1194"/>
<dbReference type="CPTAC" id="CPTAC-1195"/>
<dbReference type="CPTAC" id="CPTAC-278"/>
<dbReference type="CPTAC" id="CPTAC-279"/>
<dbReference type="jPOST" id="P26639"/>
<dbReference type="MassIVE" id="P26639"/>
<dbReference type="PaxDb" id="9606-ENSP00000387710"/>
<dbReference type="PeptideAtlas" id="P26639"/>
<dbReference type="ProteomicsDB" id="3957"/>
<dbReference type="ProteomicsDB" id="54357">
    <molecule id="P26639-1"/>
</dbReference>
<dbReference type="Pumba" id="P26639"/>
<dbReference type="ABCD" id="P26639">
    <property type="antibodies" value="2 sequenced antibodies"/>
</dbReference>
<dbReference type="Antibodypedia" id="9874">
    <property type="antibodies" value="186 antibodies from 30 providers"/>
</dbReference>
<dbReference type="DNASU" id="6897"/>
<dbReference type="Ensembl" id="ENST00000265112.8">
    <molecule id="P26639-1"/>
    <property type="protein sequence ID" value="ENSP00000265112.3"/>
    <property type="gene ID" value="ENSG00000113407.14"/>
</dbReference>
<dbReference type="Ensembl" id="ENST00000455217.6">
    <molecule id="P26639-2"/>
    <property type="protein sequence ID" value="ENSP00000387710.2"/>
    <property type="gene ID" value="ENSG00000113407.14"/>
</dbReference>
<dbReference type="Ensembl" id="ENST00000502553.5">
    <molecule id="P26639-1"/>
    <property type="protein sequence ID" value="ENSP00000424387.1"/>
    <property type="gene ID" value="ENSG00000113407.14"/>
</dbReference>
<dbReference type="GeneID" id="6897"/>
<dbReference type="KEGG" id="hsa:6897"/>
<dbReference type="MANE-Select" id="ENST00000265112.8">
    <property type="protein sequence ID" value="ENSP00000265112.3"/>
    <property type="RefSeq nucleotide sequence ID" value="NM_152295.5"/>
    <property type="RefSeq protein sequence ID" value="NP_689508.3"/>
</dbReference>
<dbReference type="UCSC" id="uc003jhy.5">
    <molecule id="P26639-1"/>
    <property type="organism name" value="human"/>
</dbReference>
<dbReference type="AGR" id="HGNC:11572"/>
<dbReference type="CTD" id="6897"/>
<dbReference type="DisGeNET" id="6897"/>
<dbReference type="GeneCards" id="TARS1"/>
<dbReference type="HGNC" id="HGNC:11572">
    <property type="gene designation" value="TARS1"/>
</dbReference>
<dbReference type="HPA" id="ENSG00000113407">
    <property type="expression patterns" value="Low tissue specificity"/>
</dbReference>
<dbReference type="MalaCards" id="TARS1"/>
<dbReference type="MIM" id="187790">
    <property type="type" value="gene"/>
</dbReference>
<dbReference type="MIM" id="618546">
    <property type="type" value="phenotype"/>
</dbReference>
<dbReference type="neXtProt" id="NX_P26639"/>
<dbReference type="OpenTargets" id="ENSG00000113407"/>
<dbReference type="Orphanet" id="33364">
    <property type="disease" value="Trichothiodystrophy"/>
</dbReference>
<dbReference type="PharmGKB" id="PA36337"/>
<dbReference type="VEuPathDB" id="HostDB:ENSG00000113407"/>
<dbReference type="eggNOG" id="KOG1637">
    <property type="taxonomic scope" value="Eukaryota"/>
</dbReference>
<dbReference type="GeneTree" id="ENSGT00940000154969"/>
<dbReference type="HOGENOM" id="CLU_008554_0_1_1"/>
<dbReference type="InParanoid" id="P26639"/>
<dbReference type="OMA" id="MMNQRLW"/>
<dbReference type="OrthoDB" id="5423599at2759"/>
<dbReference type="PAN-GO" id="P26639">
    <property type="GO annotations" value="2 GO annotations based on evolutionary models"/>
</dbReference>
<dbReference type="PhylomeDB" id="P26639"/>
<dbReference type="TreeFam" id="TF300858"/>
<dbReference type="BRENDA" id="6.1.1.3">
    <property type="organism ID" value="2681"/>
</dbReference>
<dbReference type="PathwayCommons" id="P26639"/>
<dbReference type="Reactome" id="R-HSA-379716">
    <property type="pathway name" value="Cytosolic tRNA aminoacylation"/>
</dbReference>
<dbReference type="SignaLink" id="P26639"/>
<dbReference type="SIGNOR" id="P26639"/>
<dbReference type="BioGRID-ORCS" id="6897">
    <property type="hits" value="801 hits in 1159 CRISPR screens"/>
</dbReference>
<dbReference type="CD-CODE" id="91857CE7">
    <property type="entry name" value="Nucleolus"/>
</dbReference>
<dbReference type="ChiTaRS" id="TARS">
    <property type="organism name" value="human"/>
</dbReference>
<dbReference type="EvolutionaryTrace" id="P26639"/>
<dbReference type="GeneWiki" id="TARS_(gene)"/>
<dbReference type="GenomeRNAi" id="6897"/>
<dbReference type="Pharos" id="P26639">
    <property type="development level" value="Tchem"/>
</dbReference>
<dbReference type="PRO" id="PR:P26639"/>
<dbReference type="Proteomes" id="UP000005640">
    <property type="component" value="Chromosome 5"/>
</dbReference>
<dbReference type="RNAct" id="P26639">
    <property type="molecule type" value="protein"/>
</dbReference>
<dbReference type="Bgee" id="ENSG00000113407">
    <property type="expression patterns" value="Expressed in sural nerve and 206 other cell types or tissues"/>
</dbReference>
<dbReference type="ExpressionAtlas" id="P26639">
    <property type="expression patterns" value="baseline and differential"/>
</dbReference>
<dbReference type="GO" id="GO:0005829">
    <property type="term" value="C:cytosol"/>
    <property type="evidence" value="ECO:0000304"/>
    <property type="project" value="Reactome"/>
</dbReference>
<dbReference type="GO" id="GO:0070062">
    <property type="term" value="C:extracellular exosome"/>
    <property type="evidence" value="ECO:0007005"/>
    <property type="project" value="UniProtKB"/>
</dbReference>
<dbReference type="GO" id="GO:0005739">
    <property type="term" value="C:mitochondrion"/>
    <property type="evidence" value="ECO:0000318"/>
    <property type="project" value="GO_Central"/>
</dbReference>
<dbReference type="GO" id="GO:0005524">
    <property type="term" value="F:ATP binding"/>
    <property type="evidence" value="ECO:0000315"/>
    <property type="project" value="UniProtKB"/>
</dbReference>
<dbReference type="GO" id="GO:0042802">
    <property type="term" value="F:identical protein binding"/>
    <property type="evidence" value="ECO:0000353"/>
    <property type="project" value="UniProtKB"/>
</dbReference>
<dbReference type="GO" id="GO:0004829">
    <property type="term" value="F:threonine-tRNA ligase activity"/>
    <property type="evidence" value="ECO:0000314"/>
    <property type="project" value="UniProtKB"/>
</dbReference>
<dbReference type="GO" id="GO:0000049">
    <property type="term" value="F:tRNA binding"/>
    <property type="evidence" value="ECO:0007669"/>
    <property type="project" value="UniProtKB-KW"/>
</dbReference>
<dbReference type="GO" id="GO:0008270">
    <property type="term" value="F:zinc ion binding"/>
    <property type="evidence" value="ECO:0000314"/>
    <property type="project" value="UniProtKB"/>
</dbReference>
<dbReference type="GO" id="GO:0006435">
    <property type="term" value="P:threonyl-tRNA aminoacylation"/>
    <property type="evidence" value="ECO:0000314"/>
    <property type="project" value="UniProtKB"/>
</dbReference>
<dbReference type="CDD" id="cd01667">
    <property type="entry name" value="TGS_ThrRS"/>
    <property type="match status" value="1"/>
</dbReference>
<dbReference type="CDD" id="cd00860">
    <property type="entry name" value="ThrRS_anticodon"/>
    <property type="match status" value="1"/>
</dbReference>
<dbReference type="CDD" id="cd00771">
    <property type="entry name" value="ThrRS_core"/>
    <property type="match status" value="1"/>
</dbReference>
<dbReference type="FunFam" id="3.30.930.10:FF:000009">
    <property type="entry name" value="Threonine--tRNA ligase 2, cytoplasmic"/>
    <property type="match status" value="1"/>
</dbReference>
<dbReference type="FunFam" id="3.40.50.800:FF:000003">
    <property type="entry name" value="Threonine--tRNA ligase 2, cytoplasmic"/>
    <property type="match status" value="1"/>
</dbReference>
<dbReference type="FunFam" id="3.10.20.30:FF:000006">
    <property type="entry name" value="Threonine--tRNA ligase, cytoplasmic"/>
    <property type="match status" value="1"/>
</dbReference>
<dbReference type="FunFam" id="3.30.980.10:FF:000003">
    <property type="entry name" value="Threonine--tRNA ligase, cytoplasmic"/>
    <property type="match status" value="1"/>
</dbReference>
<dbReference type="Gene3D" id="3.10.20.30">
    <property type="match status" value="1"/>
</dbReference>
<dbReference type="Gene3D" id="3.40.50.800">
    <property type="entry name" value="Anticodon-binding domain"/>
    <property type="match status" value="1"/>
</dbReference>
<dbReference type="Gene3D" id="3.30.930.10">
    <property type="entry name" value="Bira Bifunctional Protein, Domain 2"/>
    <property type="match status" value="1"/>
</dbReference>
<dbReference type="Gene3D" id="3.30.980.10">
    <property type="entry name" value="Threonyl-trna Synthetase, Chain A, domain 2"/>
    <property type="match status" value="1"/>
</dbReference>
<dbReference type="HAMAP" id="MF_00184">
    <property type="entry name" value="Thr_tRNA_synth"/>
    <property type="match status" value="1"/>
</dbReference>
<dbReference type="InterPro" id="IPR002314">
    <property type="entry name" value="aa-tRNA-synt_IIb"/>
</dbReference>
<dbReference type="InterPro" id="IPR006195">
    <property type="entry name" value="aa-tRNA-synth_II"/>
</dbReference>
<dbReference type="InterPro" id="IPR045864">
    <property type="entry name" value="aa-tRNA-synth_II/BPL/LPL"/>
</dbReference>
<dbReference type="InterPro" id="IPR004154">
    <property type="entry name" value="Anticodon-bd"/>
</dbReference>
<dbReference type="InterPro" id="IPR036621">
    <property type="entry name" value="Anticodon-bd_dom_sf"/>
</dbReference>
<dbReference type="InterPro" id="IPR012675">
    <property type="entry name" value="Beta-grasp_dom_sf"/>
</dbReference>
<dbReference type="InterPro" id="IPR004095">
    <property type="entry name" value="TGS"/>
</dbReference>
<dbReference type="InterPro" id="IPR012676">
    <property type="entry name" value="TGS-like"/>
</dbReference>
<dbReference type="InterPro" id="IPR002320">
    <property type="entry name" value="Thr-tRNA-ligase_IIa"/>
</dbReference>
<dbReference type="InterPro" id="IPR018163">
    <property type="entry name" value="Thr/Ala-tRNA-synth_IIc_edit"/>
</dbReference>
<dbReference type="InterPro" id="IPR047246">
    <property type="entry name" value="ThrRS_anticodon"/>
</dbReference>
<dbReference type="InterPro" id="IPR033728">
    <property type="entry name" value="ThrRS_core"/>
</dbReference>
<dbReference type="InterPro" id="IPR012947">
    <property type="entry name" value="tRNA_SAD"/>
</dbReference>
<dbReference type="NCBIfam" id="TIGR00418">
    <property type="entry name" value="thrS"/>
    <property type="match status" value="1"/>
</dbReference>
<dbReference type="PANTHER" id="PTHR11451:SF36">
    <property type="entry name" value="THREONINE--TRNA LIGASE 1, CYTOPLASMIC"/>
    <property type="match status" value="1"/>
</dbReference>
<dbReference type="PANTHER" id="PTHR11451">
    <property type="entry name" value="THREONINE-TRNA LIGASE"/>
    <property type="match status" value="1"/>
</dbReference>
<dbReference type="Pfam" id="PF03129">
    <property type="entry name" value="HGTP_anticodon"/>
    <property type="match status" value="1"/>
</dbReference>
<dbReference type="Pfam" id="PF02824">
    <property type="entry name" value="TGS"/>
    <property type="match status" value="1"/>
</dbReference>
<dbReference type="Pfam" id="PF00587">
    <property type="entry name" value="tRNA-synt_2b"/>
    <property type="match status" value="1"/>
</dbReference>
<dbReference type="Pfam" id="PF07973">
    <property type="entry name" value="tRNA_SAD"/>
    <property type="match status" value="1"/>
</dbReference>
<dbReference type="PRINTS" id="PR01047">
    <property type="entry name" value="TRNASYNTHTHR"/>
</dbReference>
<dbReference type="SMART" id="SM00863">
    <property type="entry name" value="tRNA_SAD"/>
    <property type="match status" value="1"/>
</dbReference>
<dbReference type="SUPFAM" id="SSF52954">
    <property type="entry name" value="Class II aaRS ABD-related"/>
    <property type="match status" value="1"/>
</dbReference>
<dbReference type="SUPFAM" id="SSF55681">
    <property type="entry name" value="Class II aaRS and biotin synthetases"/>
    <property type="match status" value="1"/>
</dbReference>
<dbReference type="SUPFAM" id="SSF81271">
    <property type="entry name" value="TGS-like"/>
    <property type="match status" value="1"/>
</dbReference>
<dbReference type="SUPFAM" id="SSF55186">
    <property type="entry name" value="ThrRS/AlaRS common domain"/>
    <property type="match status" value="1"/>
</dbReference>
<dbReference type="PROSITE" id="PS50862">
    <property type="entry name" value="AA_TRNA_LIGASE_II"/>
    <property type="match status" value="1"/>
</dbReference>
<dbReference type="PROSITE" id="PS51880">
    <property type="entry name" value="TGS"/>
    <property type="match status" value="1"/>
</dbReference>